<sequence length="208" mass="23597">MIVIKDAHFLTSSNNLSQCPASLTSEMVILGRSNVGKSTFINTLLGKNLAKSSATPGKTRLANFFSTTWEDKENALTTTFNVIDLPGFGYAKVSKSLKKEWEGFLWELLSVRVSIKLFIHLIDARHLDLEIDKNAKENIQALLRPDQAYLSLFTKFDKLNKNEQHRLFLNAPKPFLINTIHFNALSSKYPTLEIVRQTLLKYLLTNPL</sequence>
<keyword id="KW-0131">Cell cycle</keyword>
<keyword id="KW-0132">Cell division</keyword>
<keyword id="KW-0342">GTP-binding</keyword>
<keyword id="KW-0460">Magnesium</keyword>
<keyword id="KW-0479">Metal-binding</keyword>
<keyword id="KW-0547">Nucleotide-binding</keyword>
<keyword id="KW-0717">Septation</keyword>
<name>ENGB_HELPJ</name>
<accession>Q9ZJ42</accession>
<comment type="function">
    <text evidence="1">Necessary for normal cell division and for the maintenance of normal septation.</text>
</comment>
<comment type="cofactor">
    <cofactor evidence="1">
        <name>Mg(2+)</name>
        <dbReference type="ChEBI" id="CHEBI:18420"/>
    </cofactor>
</comment>
<comment type="similarity">
    <text evidence="1">Belongs to the TRAFAC class TrmE-Era-EngA-EngB-Septin-like GTPase superfamily. EngB GTPase family.</text>
</comment>
<feature type="chain" id="PRO_0000157754" description="Probable GTP-binding protein EngB">
    <location>
        <begin position="1"/>
        <end position="208"/>
    </location>
</feature>
<feature type="domain" description="EngB-type G" evidence="1">
    <location>
        <begin position="23"/>
        <end position="205"/>
    </location>
</feature>
<feature type="binding site" evidence="1">
    <location>
        <begin position="31"/>
        <end position="38"/>
    </location>
    <ligand>
        <name>GTP</name>
        <dbReference type="ChEBI" id="CHEBI:37565"/>
    </ligand>
</feature>
<feature type="binding site" evidence="1">
    <location>
        <position position="38"/>
    </location>
    <ligand>
        <name>Mg(2+)</name>
        <dbReference type="ChEBI" id="CHEBI:18420"/>
    </ligand>
</feature>
<feature type="binding site" evidence="1">
    <location>
        <begin position="57"/>
        <end position="61"/>
    </location>
    <ligand>
        <name>GTP</name>
        <dbReference type="ChEBI" id="CHEBI:37565"/>
    </ligand>
</feature>
<feature type="binding site" evidence="1">
    <location>
        <position position="59"/>
    </location>
    <ligand>
        <name>Mg(2+)</name>
        <dbReference type="ChEBI" id="CHEBI:18420"/>
    </ligand>
</feature>
<feature type="binding site" evidence="1">
    <location>
        <begin position="84"/>
        <end position="87"/>
    </location>
    <ligand>
        <name>GTP</name>
        <dbReference type="ChEBI" id="CHEBI:37565"/>
    </ligand>
</feature>
<feature type="binding site" evidence="1">
    <location>
        <begin position="154"/>
        <end position="157"/>
    </location>
    <ligand>
        <name>GTP</name>
        <dbReference type="ChEBI" id="CHEBI:37565"/>
    </ligand>
</feature>
<feature type="binding site" evidence="1">
    <location>
        <begin position="182"/>
        <end position="184"/>
    </location>
    <ligand>
        <name>GTP</name>
        <dbReference type="ChEBI" id="CHEBI:37565"/>
    </ligand>
</feature>
<organism>
    <name type="scientific">Helicobacter pylori (strain J99 / ATCC 700824)</name>
    <name type="common">Campylobacter pylori J99</name>
    <dbReference type="NCBI Taxonomy" id="85963"/>
    <lineage>
        <taxon>Bacteria</taxon>
        <taxon>Pseudomonadati</taxon>
        <taxon>Campylobacterota</taxon>
        <taxon>Epsilonproteobacteria</taxon>
        <taxon>Campylobacterales</taxon>
        <taxon>Helicobacteraceae</taxon>
        <taxon>Helicobacter</taxon>
    </lineage>
</organism>
<evidence type="ECO:0000255" key="1">
    <source>
        <dbReference type="HAMAP-Rule" id="MF_00321"/>
    </source>
</evidence>
<reference key="1">
    <citation type="journal article" date="1999" name="Nature">
        <title>Genomic sequence comparison of two unrelated isolates of the human gastric pathogen Helicobacter pylori.</title>
        <authorList>
            <person name="Alm R.A."/>
            <person name="Ling L.-S.L."/>
            <person name="Moir D.T."/>
            <person name="King B.L."/>
            <person name="Brown E.D."/>
            <person name="Doig P.C."/>
            <person name="Smith D.R."/>
            <person name="Noonan B."/>
            <person name="Guild B.C."/>
            <person name="deJonge B.L."/>
            <person name="Carmel G."/>
            <person name="Tummino P.J."/>
            <person name="Caruso A."/>
            <person name="Uria-Nickelsen M."/>
            <person name="Mills D.M."/>
            <person name="Ives C."/>
            <person name="Gibson R."/>
            <person name="Merberg D."/>
            <person name="Mills S.D."/>
            <person name="Jiang Q."/>
            <person name="Taylor D.E."/>
            <person name="Vovis G.F."/>
            <person name="Trust T.J."/>
        </authorList>
    </citation>
    <scope>NUCLEOTIDE SEQUENCE [LARGE SCALE GENOMIC DNA]</scope>
    <source>
        <strain>J99 / ATCC 700824</strain>
    </source>
</reference>
<dbReference type="EMBL" id="AE001439">
    <property type="protein sequence ID" value="AAD07059.1"/>
    <property type="molecule type" value="Genomic_DNA"/>
</dbReference>
<dbReference type="PIR" id="D71802">
    <property type="entry name" value="D71802"/>
</dbReference>
<dbReference type="RefSeq" id="WP_000635368.1">
    <property type="nucleotide sequence ID" value="NC_000921.1"/>
</dbReference>
<dbReference type="SMR" id="Q9ZJ42"/>
<dbReference type="KEGG" id="hpj:jhp_1475"/>
<dbReference type="PATRIC" id="fig|85963.30.peg.1066"/>
<dbReference type="eggNOG" id="COG0218">
    <property type="taxonomic scope" value="Bacteria"/>
</dbReference>
<dbReference type="Proteomes" id="UP000000804">
    <property type="component" value="Chromosome"/>
</dbReference>
<dbReference type="GO" id="GO:0005829">
    <property type="term" value="C:cytosol"/>
    <property type="evidence" value="ECO:0007669"/>
    <property type="project" value="TreeGrafter"/>
</dbReference>
<dbReference type="GO" id="GO:0005525">
    <property type="term" value="F:GTP binding"/>
    <property type="evidence" value="ECO:0007669"/>
    <property type="project" value="UniProtKB-UniRule"/>
</dbReference>
<dbReference type="GO" id="GO:0046872">
    <property type="term" value="F:metal ion binding"/>
    <property type="evidence" value="ECO:0007669"/>
    <property type="project" value="UniProtKB-KW"/>
</dbReference>
<dbReference type="GO" id="GO:0000917">
    <property type="term" value="P:division septum assembly"/>
    <property type="evidence" value="ECO:0007669"/>
    <property type="project" value="UniProtKB-KW"/>
</dbReference>
<dbReference type="CDD" id="cd01876">
    <property type="entry name" value="YihA_EngB"/>
    <property type="match status" value="1"/>
</dbReference>
<dbReference type="FunFam" id="3.40.50.300:FF:002409">
    <property type="entry name" value="Probable GTP-binding protein EngB"/>
    <property type="match status" value="1"/>
</dbReference>
<dbReference type="Gene3D" id="3.40.50.300">
    <property type="entry name" value="P-loop containing nucleotide triphosphate hydrolases"/>
    <property type="match status" value="1"/>
</dbReference>
<dbReference type="HAMAP" id="MF_00321">
    <property type="entry name" value="GTPase_EngB"/>
    <property type="match status" value="1"/>
</dbReference>
<dbReference type="InterPro" id="IPR030393">
    <property type="entry name" value="G_ENGB_dom"/>
</dbReference>
<dbReference type="InterPro" id="IPR006073">
    <property type="entry name" value="GTP-bd"/>
</dbReference>
<dbReference type="InterPro" id="IPR019987">
    <property type="entry name" value="GTP-bd_ribosome_bio_YsxC"/>
</dbReference>
<dbReference type="InterPro" id="IPR027417">
    <property type="entry name" value="P-loop_NTPase"/>
</dbReference>
<dbReference type="NCBIfam" id="TIGR03598">
    <property type="entry name" value="GTPase_YsxC"/>
    <property type="match status" value="1"/>
</dbReference>
<dbReference type="PANTHER" id="PTHR11649:SF13">
    <property type="entry name" value="ENGB-TYPE G DOMAIN-CONTAINING PROTEIN"/>
    <property type="match status" value="1"/>
</dbReference>
<dbReference type="PANTHER" id="PTHR11649">
    <property type="entry name" value="MSS1/TRME-RELATED GTP-BINDING PROTEIN"/>
    <property type="match status" value="1"/>
</dbReference>
<dbReference type="Pfam" id="PF01926">
    <property type="entry name" value="MMR_HSR1"/>
    <property type="match status" value="1"/>
</dbReference>
<dbReference type="SUPFAM" id="SSF52540">
    <property type="entry name" value="P-loop containing nucleoside triphosphate hydrolases"/>
    <property type="match status" value="1"/>
</dbReference>
<dbReference type="PROSITE" id="PS51706">
    <property type="entry name" value="G_ENGB"/>
    <property type="match status" value="1"/>
</dbReference>
<gene>
    <name evidence="1" type="primary">engB</name>
    <name type="ordered locus">jhp_1475</name>
</gene>
<protein>
    <recommendedName>
        <fullName evidence="1">Probable GTP-binding protein EngB</fullName>
    </recommendedName>
</protein>
<proteinExistence type="inferred from homology"/>